<organism>
    <name type="scientific">Acidithiobacillus ferrooxidans (strain ATCC 53993 / BNL-5-31)</name>
    <name type="common">Leptospirillum ferrooxidans (ATCC 53993)</name>
    <dbReference type="NCBI Taxonomy" id="380394"/>
    <lineage>
        <taxon>Bacteria</taxon>
        <taxon>Pseudomonadati</taxon>
        <taxon>Pseudomonadota</taxon>
        <taxon>Acidithiobacillia</taxon>
        <taxon>Acidithiobacillales</taxon>
        <taxon>Acidithiobacillaceae</taxon>
        <taxon>Acidithiobacillus</taxon>
    </lineage>
</organism>
<sequence length="113" mass="12490">MHELSLCEGILQILEEQSRTQGFIQVHRVCLEIGALASVEPEALRFHFDVVTQGTLAEGSHLEIVTVPAQAWCLPCGEKVSVGQYFDACPQCGSRQLQVIAGEELRIQQLEVE</sequence>
<accession>B5ERM3</accession>
<dbReference type="EMBL" id="CP001132">
    <property type="protein sequence ID" value="ACH85069.1"/>
    <property type="molecule type" value="Genomic_DNA"/>
</dbReference>
<dbReference type="RefSeq" id="WP_012537695.1">
    <property type="nucleotide sequence ID" value="NC_011206.1"/>
</dbReference>
<dbReference type="SMR" id="B5ERM3"/>
<dbReference type="GeneID" id="65282264"/>
<dbReference type="KEGG" id="afe:Lferr_2885"/>
<dbReference type="eggNOG" id="COG0375">
    <property type="taxonomic scope" value="Bacteria"/>
</dbReference>
<dbReference type="HOGENOM" id="CLU_126929_0_0_6"/>
<dbReference type="GO" id="GO:0016151">
    <property type="term" value="F:nickel cation binding"/>
    <property type="evidence" value="ECO:0007669"/>
    <property type="project" value="UniProtKB-UniRule"/>
</dbReference>
<dbReference type="GO" id="GO:0008270">
    <property type="term" value="F:zinc ion binding"/>
    <property type="evidence" value="ECO:0007669"/>
    <property type="project" value="UniProtKB-UniRule"/>
</dbReference>
<dbReference type="GO" id="GO:0051604">
    <property type="term" value="P:protein maturation"/>
    <property type="evidence" value="ECO:0007669"/>
    <property type="project" value="InterPro"/>
</dbReference>
<dbReference type="GO" id="GO:0036211">
    <property type="term" value="P:protein modification process"/>
    <property type="evidence" value="ECO:0007669"/>
    <property type="project" value="UniProtKB-UniRule"/>
</dbReference>
<dbReference type="FunFam" id="3.30.2320.80:FF:000001">
    <property type="entry name" value="Hydrogenase maturation factor HypA"/>
    <property type="match status" value="1"/>
</dbReference>
<dbReference type="Gene3D" id="3.30.2320.80">
    <property type="match status" value="1"/>
</dbReference>
<dbReference type="HAMAP" id="MF_00213">
    <property type="entry name" value="HypA_HybF"/>
    <property type="match status" value="1"/>
</dbReference>
<dbReference type="InterPro" id="IPR000688">
    <property type="entry name" value="HypA/HybF"/>
</dbReference>
<dbReference type="NCBIfam" id="TIGR00100">
    <property type="entry name" value="hypA"/>
    <property type="match status" value="1"/>
</dbReference>
<dbReference type="NCBIfam" id="NF009046">
    <property type="entry name" value="PRK12380.1"/>
    <property type="match status" value="1"/>
</dbReference>
<dbReference type="PANTHER" id="PTHR34535">
    <property type="entry name" value="HYDROGENASE MATURATION FACTOR HYPA"/>
    <property type="match status" value="1"/>
</dbReference>
<dbReference type="PANTHER" id="PTHR34535:SF3">
    <property type="entry name" value="HYDROGENASE MATURATION FACTOR HYPA"/>
    <property type="match status" value="1"/>
</dbReference>
<dbReference type="Pfam" id="PF01155">
    <property type="entry name" value="HypA"/>
    <property type="match status" value="1"/>
</dbReference>
<dbReference type="PIRSF" id="PIRSF004761">
    <property type="entry name" value="Hydrgn_mat_HypA"/>
    <property type="match status" value="1"/>
</dbReference>
<name>HYPA_ACIF5</name>
<proteinExistence type="inferred from homology"/>
<feature type="chain" id="PRO_1000099885" description="Hydrogenase maturation factor HypA">
    <location>
        <begin position="1"/>
        <end position="113"/>
    </location>
</feature>
<feature type="binding site" evidence="1">
    <location>
        <position position="2"/>
    </location>
    <ligand>
        <name>Ni(2+)</name>
        <dbReference type="ChEBI" id="CHEBI:49786"/>
    </ligand>
</feature>
<feature type="binding site" evidence="1">
    <location>
        <position position="73"/>
    </location>
    <ligand>
        <name>Zn(2+)</name>
        <dbReference type="ChEBI" id="CHEBI:29105"/>
    </ligand>
</feature>
<feature type="binding site" evidence="1">
    <location>
        <position position="76"/>
    </location>
    <ligand>
        <name>Zn(2+)</name>
        <dbReference type="ChEBI" id="CHEBI:29105"/>
    </ligand>
</feature>
<feature type="binding site" evidence="1">
    <location>
        <position position="89"/>
    </location>
    <ligand>
        <name>Zn(2+)</name>
        <dbReference type="ChEBI" id="CHEBI:29105"/>
    </ligand>
</feature>
<feature type="binding site" evidence="1">
    <location>
        <position position="92"/>
    </location>
    <ligand>
        <name>Zn(2+)</name>
        <dbReference type="ChEBI" id="CHEBI:29105"/>
    </ligand>
</feature>
<reference key="1">
    <citation type="submission" date="2008-08" db="EMBL/GenBank/DDBJ databases">
        <title>Complete sequence of Acidithiobacillus ferrooxidans ATCC 53993.</title>
        <authorList>
            <person name="Lucas S."/>
            <person name="Copeland A."/>
            <person name="Lapidus A."/>
            <person name="Glavina del Rio T."/>
            <person name="Dalin E."/>
            <person name="Tice H."/>
            <person name="Bruce D."/>
            <person name="Goodwin L."/>
            <person name="Pitluck S."/>
            <person name="Sims D."/>
            <person name="Brettin T."/>
            <person name="Detter J.C."/>
            <person name="Han C."/>
            <person name="Kuske C.R."/>
            <person name="Larimer F."/>
            <person name="Land M."/>
            <person name="Hauser L."/>
            <person name="Kyrpides N."/>
            <person name="Lykidis A."/>
            <person name="Borole A.P."/>
        </authorList>
    </citation>
    <scope>NUCLEOTIDE SEQUENCE [LARGE SCALE GENOMIC DNA]</scope>
    <source>
        <strain>ATCC 53993 / BNL-5-31</strain>
    </source>
</reference>
<evidence type="ECO:0000255" key="1">
    <source>
        <dbReference type="HAMAP-Rule" id="MF_00213"/>
    </source>
</evidence>
<gene>
    <name evidence="1" type="primary">hypA</name>
    <name type="ordered locus">Lferr_2885</name>
</gene>
<comment type="function">
    <text evidence="1">Involved in the maturation of [NiFe] hydrogenases. Required for nickel insertion into the metal center of the hydrogenase.</text>
</comment>
<comment type="similarity">
    <text evidence="1">Belongs to the HypA/HybF family.</text>
</comment>
<protein>
    <recommendedName>
        <fullName evidence="1">Hydrogenase maturation factor HypA</fullName>
    </recommendedName>
</protein>
<keyword id="KW-0479">Metal-binding</keyword>
<keyword id="KW-0533">Nickel</keyword>
<keyword id="KW-0862">Zinc</keyword>